<feature type="chain" id="PRO_0000462279" description="UDP-N-acetylglucosamine 2-epimerase">
    <location>
        <begin position="1"/>
        <end position="383"/>
    </location>
</feature>
<gene>
    <name evidence="2" type="primary">HS11.17</name>
</gene>
<organism>
    <name type="scientific">Campylobacter jejuni</name>
    <dbReference type="NCBI Taxonomy" id="197"/>
    <lineage>
        <taxon>Bacteria</taxon>
        <taxon>Pseudomonadati</taxon>
        <taxon>Campylobacterota</taxon>
        <taxon>Epsilonproteobacteria</taxon>
        <taxon>Campylobacterales</taxon>
        <taxon>Campylobacteraceae</taxon>
        <taxon>Campylobacter</taxon>
    </lineage>
</organism>
<evidence type="ECO:0000269" key="1">
    <source>
    </source>
</evidence>
<evidence type="ECO:0000303" key="2">
    <source>
    </source>
</evidence>
<evidence type="ECO:0000305" key="3"/>
<evidence type="ECO:0000312" key="4">
    <source>
        <dbReference type="EMBL" id="ALT31929.1"/>
    </source>
</evidence>
<proteinExistence type="evidence at protein level"/>
<keyword id="KW-0972">Capsule biogenesis/degradation</keyword>
<keyword id="KW-0413">Isomerase</keyword>
<protein>
    <recommendedName>
        <fullName evidence="3">UDP-N-acetylglucosamine 2-epimerase</fullName>
        <ecNumber evidence="1">5.1.3.14</ecNumber>
    </recommendedName>
    <alternativeName>
        <fullName evidence="2">Non-hydrolyzing UDP-GlcNAc 2-epimerase</fullName>
    </alternativeName>
</protein>
<name>UAGEP_CAMJU</name>
<sequence>MVKKILIVFGTRPEAIKMAPLVKIMENRNDVNFRVCVTGQHRQMLDQILNIFDIKPDYDLNIMQENQDLYDITLKILCGMKNVLNDFKPNIVLVHGDTTTASVTALAAFYQKIKIAHVEAGLRTYNICNPWPEEANRQIIGVLANIHFTPTVKSAENLIKEGKNKEGIFITGNTVIDALFYMTEKIKNDKTFKIKVLSSIGNEYKINDNKKFILVTGHRRENFGEGFLQICEALKIIAINNPDIDIVYPVHLNPNVQKPVKMLLLNISNIYLINPLKYEEFIYLMSKSYFIITDSGGIQEEAPSLGKPILVMRETTERPEAVEAGVVKLVGACKQNIIRESQKLIDDQDEYEKMSKAYNPYGDGRACEKIINILIKGKNNESI</sequence>
<dbReference type="EC" id="5.1.3.14" evidence="1"/>
<dbReference type="EMBL" id="KT868845">
    <property type="protein sequence ID" value="ALT31929.1"/>
    <property type="molecule type" value="Genomic_DNA"/>
</dbReference>
<dbReference type="UniPathway" id="UPA00934"/>
<dbReference type="GO" id="GO:0008761">
    <property type="term" value="F:UDP-N-acetylglucosamine 2-epimerase activity"/>
    <property type="evidence" value="ECO:0007669"/>
    <property type="project" value="UniProtKB-EC"/>
</dbReference>
<dbReference type="CDD" id="cd03786">
    <property type="entry name" value="GTB_UDP-GlcNAc_2-Epimerase"/>
    <property type="match status" value="1"/>
</dbReference>
<dbReference type="FunFam" id="3.40.50.2000:FF:000043">
    <property type="entry name" value="UDP-N-acetylglucosamine 2-epimerase"/>
    <property type="match status" value="1"/>
</dbReference>
<dbReference type="Gene3D" id="3.40.50.2000">
    <property type="entry name" value="Glycogen Phosphorylase B"/>
    <property type="match status" value="2"/>
</dbReference>
<dbReference type="InterPro" id="IPR003331">
    <property type="entry name" value="UDP_GlcNAc_Epimerase_2_dom"/>
</dbReference>
<dbReference type="InterPro" id="IPR029767">
    <property type="entry name" value="WecB-like"/>
</dbReference>
<dbReference type="NCBIfam" id="TIGR00236">
    <property type="entry name" value="wecB"/>
    <property type="match status" value="1"/>
</dbReference>
<dbReference type="PANTHER" id="PTHR43174">
    <property type="entry name" value="UDP-N-ACETYLGLUCOSAMINE 2-EPIMERASE"/>
    <property type="match status" value="1"/>
</dbReference>
<dbReference type="PANTHER" id="PTHR43174:SF2">
    <property type="entry name" value="UDP-N-ACETYLGLUCOSAMINE 2-EPIMERASE"/>
    <property type="match status" value="1"/>
</dbReference>
<dbReference type="Pfam" id="PF02350">
    <property type="entry name" value="Epimerase_2"/>
    <property type="match status" value="1"/>
</dbReference>
<dbReference type="SUPFAM" id="SSF53756">
    <property type="entry name" value="UDP-Glycosyltransferase/glycogen phosphorylase"/>
    <property type="match status" value="1"/>
</dbReference>
<reference evidence="4" key="1">
    <citation type="journal article" date="2015" name="PLoS ONE">
        <title>Updated Campylobacter jejuni Capsule PCR Multiplex Typing System and Its Application to Clinical Isolates from South and Southeast Asia.</title>
        <authorList>
            <person name="Poly F."/>
            <person name="Serichantalergs O."/>
            <person name="Kuroiwa J."/>
            <person name="Pootong P."/>
            <person name="Mason C."/>
            <person name="Guerry P."/>
            <person name="Parker C.T."/>
        </authorList>
    </citation>
    <scope>NUCLEOTIDE SEQUENCE [GENOMIC DNA]</scope>
    <source>
        <strain>HS:11</strain>
    </source>
</reference>
<reference key="2">
    <citation type="journal article" date="2016" name="PLoS ONE">
        <authorList>
            <person name="Poly F."/>
            <person name="Serichantalergs O."/>
            <person name="Kuroiwa J."/>
            <person name="Pootong P."/>
            <person name="Mason C."/>
            <person name="Guerry P."/>
            <person name="Parker C.T."/>
        </authorList>
    </citation>
    <scope>ERRATUM OF PUBMED:26630669</scope>
</reference>
<reference key="3">
    <citation type="journal article" date="2024" name="Biochemistry">
        <title>Biosynthesis of UDP-alpha-N-Acetyl-d-mannosaminuronic Acid and CMP-beta-N-Acetyl-d-neuraminic Acid for the Capsular Polysaccharides of Campylobacter jejuni.</title>
        <authorList>
            <person name="Ghosh M.K."/>
            <person name="Raushel F.M."/>
        </authorList>
    </citation>
    <scope>FUNCTION</scope>
    <scope>CATALYTIC ACTIVITY</scope>
    <scope>BIOPHYSICOCHEMICAL PROPERTIES</scope>
    <scope>PATHWAY</scope>
    <source>
        <strain>HS:11</strain>
    </source>
</reference>
<comment type="function">
    <text evidence="1">Non-hydrolyzing C2-epimerase involved in the biosynthesis of capsular polysaccharides (PubMed:38382015). Catalyzes the C2 epimerization of UDP-N-acetylglucosamine (UDP-GlcNAc) to form UDP-N-acetylmannosamine (UDP-ManNAc) (PubMed:38382015).</text>
</comment>
<comment type="catalytic activity">
    <reaction evidence="1">
        <text>UDP-N-acetyl-alpha-D-glucosamine = UDP-N-acetyl-alpha-D-mannosamine</text>
        <dbReference type="Rhea" id="RHEA:17213"/>
        <dbReference type="ChEBI" id="CHEBI:57705"/>
        <dbReference type="ChEBI" id="CHEBI:68623"/>
        <dbReference type="EC" id="5.1.3.14"/>
    </reaction>
    <physiologicalReaction direction="left-to-right" evidence="1">
        <dbReference type="Rhea" id="RHEA:17214"/>
    </physiologicalReaction>
</comment>
<comment type="biophysicochemical properties">
    <kinetics>
        <KM evidence="1">1370 uM for UDP-GlcNAc</KM>
        <text evidence="1">kcat is 5.7 sec(-1).</text>
    </kinetics>
</comment>
<comment type="pathway">
    <text evidence="1">Capsule biogenesis; capsule polysaccharide biosynthesis.</text>
</comment>
<comment type="similarity">
    <text evidence="3">Belongs to the UDP-N-acetylglucosamine 2-epimerase family.</text>
</comment>
<accession>A0A0U3CEN8</accession>